<proteinExistence type="inferred from homology"/>
<protein>
    <recommendedName>
        <fullName>Topoisomerase I damage affected protein 11</fullName>
    </recommendedName>
</protein>
<gene>
    <name type="primary">TDA11</name>
    <name type="ORF">SCRG_04871</name>
</gene>
<name>TDA11_YEAS1</name>
<keyword id="KW-0175">Coiled coil</keyword>
<keyword id="KW-0963">Cytoplasm</keyword>
<keyword id="KW-0597">Phosphoprotein</keyword>
<feature type="chain" id="PRO_0000410761" description="Topoisomerase I damage affected protein 11">
    <location>
        <begin position="1"/>
        <end position="504"/>
    </location>
</feature>
<feature type="region of interest" description="Disordered" evidence="4">
    <location>
        <begin position="32"/>
        <end position="62"/>
    </location>
</feature>
<feature type="region of interest" description="Disordered" evidence="4">
    <location>
        <begin position="252"/>
        <end position="306"/>
    </location>
</feature>
<feature type="region of interest" description="Disordered" evidence="4">
    <location>
        <begin position="332"/>
        <end position="377"/>
    </location>
</feature>
<feature type="region of interest" description="Disordered" evidence="4">
    <location>
        <begin position="400"/>
        <end position="504"/>
    </location>
</feature>
<feature type="coiled-coil region" evidence="3">
    <location>
        <begin position="179"/>
        <end position="231"/>
    </location>
</feature>
<feature type="compositionally biased region" description="Polar residues" evidence="4">
    <location>
        <begin position="257"/>
        <end position="287"/>
    </location>
</feature>
<feature type="compositionally biased region" description="Basic and acidic residues" evidence="4">
    <location>
        <begin position="290"/>
        <end position="301"/>
    </location>
</feature>
<feature type="compositionally biased region" description="Polar residues" evidence="4">
    <location>
        <begin position="332"/>
        <end position="359"/>
    </location>
</feature>
<feature type="compositionally biased region" description="Polar residues" evidence="4">
    <location>
        <begin position="368"/>
        <end position="377"/>
    </location>
</feature>
<feature type="compositionally biased region" description="Basic and acidic residues" evidence="4">
    <location>
        <begin position="403"/>
        <end position="421"/>
    </location>
</feature>
<feature type="compositionally biased region" description="Basic residues" evidence="4">
    <location>
        <begin position="470"/>
        <end position="479"/>
    </location>
</feature>
<feature type="compositionally biased region" description="Polar residues" evidence="4">
    <location>
        <begin position="491"/>
        <end position="504"/>
    </location>
</feature>
<feature type="modified residue" description="Phosphothreonine" evidence="2">
    <location>
        <position position="236"/>
    </location>
</feature>
<feature type="modified residue" description="Phosphoserine" evidence="2">
    <location>
        <position position="244"/>
    </location>
</feature>
<feature type="modified residue" description="Phosphoserine" evidence="2">
    <location>
        <position position="286"/>
    </location>
</feature>
<accession>B3LSS3</accession>
<organism>
    <name type="scientific">Saccharomyces cerevisiae (strain RM11-1a)</name>
    <name type="common">Baker's yeast</name>
    <dbReference type="NCBI Taxonomy" id="285006"/>
    <lineage>
        <taxon>Eukaryota</taxon>
        <taxon>Fungi</taxon>
        <taxon>Dikarya</taxon>
        <taxon>Ascomycota</taxon>
        <taxon>Saccharomycotina</taxon>
        <taxon>Saccharomycetes</taxon>
        <taxon>Saccharomycetales</taxon>
        <taxon>Saccharomycetaceae</taxon>
        <taxon>Saccharomyces</taxon>
    </lineage>
</organism>
<reference key="1">
    <citation type="submission" date="2005-03" db="EMBL/GenBank/DDBJ databases">
        <title>Annotation of the Saccharomyces cerevisiae RM11-1a genome.</title>
        <authorList>
            <consortium name="The Broad Institute Genome Sequencing Platform"/>
            <person name="Birren B.W."/>
            <person name="Lander E.S."/>
            <person name="Galagan J.E."/>
            <person name="Nusbaum C."/>
            <person name="Devon K."/>
            <person name="Cuomo C."/>
            <person name="Jaffe D.B."/>
            <person name="Butler J."/>
            <person name="Alvarez P."/>
            <person name="Gnerre S."/>
            <person name="Grabherr M."/>
            <person name="Kleber M."/>
            <person name="Mauceli E.W."/>
            <person name="Brockman W."/>
            <person name="MacCallum I.A."/>
            <person name="Rounsley S."/>
            <person name="Young S.K."/>
            <person name="LaButti K."/>
            <person name="Pushparaj V."/>
            <person name="DeCaprio D."/>
            <person name="Crawford M."/>
            <person name="Koehrsen M."/>
            <person name="Engels R."/>
            <person name="Montgomery P."/>
            <person name="Pearson M."/>
            <person name="Howarth C."/>
            <person name="Larson L."/>
            <person name="Luoma S."/>
            <person name="White J."/>
            <person name="O'Leary S."/>
            <person name="Kodira C.D."/>
            <person name="Zeng Q."/>
            <person name="Yandava C."/>
            <person name="Alvarado L."/>
            <person name="Pratt S."/>
            <person name="Kruglyak L."/>
        </authorList>
    </citation>
    <scope>NUCLEOTIDE SEQUENCE [LARGE SCALE GENOMIC DNA]</scope>
    <source>
        <strain>RM11-1a</strain>
    </source>
</reference>
<comment type="subcellular location">
    <subcellularLocation>
        <location evidence="1">Cytoplasm</location>
    </subcellularLocation>
</comment>
<comment type="similarity">
    <text evidence="5">Belongs to the TDA11 family.</text>
</comment>
<dbReference type="EMBL" id="CH408053">
    <property type="protein sequence ID" value="EDV09204.1"/>
    <property type="molecule type" value="Genomic_DNA"/>
</dbReference>
<dbReference type="SMR" id="B3LSS3"/>
<dbReference type="HOGENOM" id="CLU_046807_0_0_1"/>
<dbReference type="OrthoDB" id="7991at4893"/>
<dbReference type="Proteomes" id="UP000008335">
    <property type="component" value="Unassembled WGS sequence"/>
</dbReference>
<dbReference type="GO" id="GO:0005737">
    <property type="term" value="C:cytoplasm"/>
    <property type="evidence" value="ECO:0007669"/>
    <property type="project" value="UniProtKB-SubCell"/>
</dbReference>
<dbReference type="InterPro" id="IPR031388">
    <property type="entry name" value="Tda11"/>
</dbReference>
<dbReference type="Pfam" id="PF17084">
    <property type="entry name" value="TDA11"/>
    <property type="match status" value="1"/>
</dbReference>
<evidence type="ECO:0000250" key="1"/>
<evidence type="ECO:0000250" key="2">
    <source>
        <dbReference type="UniProtKB" id="P38854"/>
    </source>
</evidence>
<evidence type="ECO:0000255" key="3"/>
<evidence type="ECO:0000256" key="4">
    <source>
        <dbReference type="SAM" id="MobiDB-lite"/>
    </source>
</evidence>
<evidence type="ECO:0000305" key="5"/>
<sequence length="504" mass="56314">MNKFDEFIESNEKDLDVDTSTRNSIISMSPVRKTGRKIRSASSNGYRLEHHRTSSAGSMHSQRLMTPTRLNDQDHPLQAKPDARRVVTRHSSVSVPNAMSKRRSLIQPMVVPTTPESQNNLPSVSHSEGSYGIPLESTTVLSSEQAMASGLRRSRNGSSQSVNSMIATTIPTNGVDVSALLQSLATKELELLECKQKIEDLKKQTQHEEQNYTRRARELHELKEQVSKHLDPSLNTPVKNRAFSPVYQNIPLESRTENAGNSSLPSSVSKPKNMGHQSTNQSRSVSPQDIQERRQRDDSSDSSKQSLWSKPLALFNQFDKIIQHEIERTLNWDDSLSGTPEVQEGTPTSNSESSAQQYDNEAPGARQKSPSQGSVSRSLWSFVSDVKAGLLGIEEENDNDVITDNRCDPVYKSDRQHEQKKSTHKITNRGQAEDSGDDSSLNMRKFKTTTKFQKDNAGNNSLTDESGHRTREKKSKRSSNKLSFIGEPDNDNSSVKNSVEMTDF</sequence>